<keyword id="KW-0963">Cytoplasm</keyword>
<keyword id="KW-0298">Galactitol metabolism</keyword>
<keyword id="KW-0418">Kinase</keyword>
<keyword id="KW-0597">Phosphoprotein</keyword>
<keyword id="KW-0598">Phosphotransferase system</keyword>
<keyword id="KW-1185">Reference proteome</keyword>
<keyword id="KW-0762">Sugar transport</keyword>
<keyword id="KW-0808">Transferase</keyword>
<keyword id="KW-0813">Transport</keyword>
<gene>
    <name type="primary">gatA</name>
    <name type="ordered locus">c2619</name>
</gene>
<sequence>MTNLFVRSGISFVDRSEVLTHIGNEMLAKGVVHDTWPQALIAREAEFPTGIMLEQHAIAIPHCEAIHAKSSAIYLLRPTNKVHFQQADDDNDVAVSLVIALIVENPQQQLKLLRCLFGKLQQPDIVETLITLPETQLKEYFTKYVLDSDE</sequence>
<dbReference type="EMBL" id="AE014075">
    <property type="protein sequence ID" value="AAN81075.1"/>
    <property type="molecule type" value="Genomic_DNA"/>
</dbReference>
<dbReference type="RefSeq" id="WP_000182899.1">
    <property type="nucleotide sequence ID" value="NZ_CP051263.1"/>
</dbReference>
<dbReference type="SMR" id="P69813"/>
<dbReference type="STRING" id="199310.c2619"/>
<dbReference type="GeneID" id="75172215"/>
<dbReference type="KEGG" id="ecc:c2619"/>
<dbReference type="eggNOG" id="COG1762">
    <property type="taxonomic scope" value="Bacteria"/>
</dbReference>
<dbReference type="HOGENOM" id="CLU_072531_6_2_6"/>
<dbReference type="BioCyc" id="ECOL199310:C2619-MONOMER"/>
<dbReference type="Proteomes" id="UP000001410">
    <property type="component" value="Chromosome"/>
</dbReference>
<dbReference type="GO" id="GO:0005737">
    <property type="term" value="C:cytoplasm"/>
    <property type="evidence" value="ECO:0007669"/>
    <property type="project" value="UniProtKB-SubCell"/>
</dbReference>
<dbReference type="GO" id="GO:0016301">
    <property type="term" value="F:kinase activity"/>
    <property type="evidence" value="ECO:0007669"/>
    <property type="project" value="UniProtKB-KW"/>
</dbReference>
<dbReference type="GO" id="GO:0030295">
    <property type="term" value="F:protein kinase activator activity"/>
    <property type="evidence" value="ECO:0007669"/>
    <property type="project" value="TreeGrafter"/>
</dbReference>
<dbReference type="GO" id="GO:0019402">
    <property type="term" value="P:galactitol metabolic process"/>
    <property type="evidence" value="ECO:0007669"/>
    <property type="project" value="UniProtKB-KW"/>
</dbReference>
<dbReference type="GO" id="GO:0009401">
    <property type="term" value="P:phosphoenolpyruvate-dependent sugar phosphotransferase system"/>
    <property type="evidence" value="ECO:0007669"/>
    <property type="project" value="UniProtKB-KW"/>
</dbReference>
<dbReference type="CDD" id="cd00211">
    <property type="entry name" value="PTS_IIA_fru"/>
    <property type="match status" value="1"/>
</dbReference>
<dbReference type="FunFam" id="3.40.930.10:FF:000016">
    <property type="entry name" value="Galactitol-specific enzyme IIA of phosphotransferase system"/>
    <property type="match status" value="1"/>
</dbReference>
<dbReference type="Gene3D" id="3.40.930.10">
    <property type="entry name" value="Mannitol-specific EII, Chain A"/>
    <property type="match status" value="1"/>
</dbReference>
<dbReference type="InterPro" id="IPR016152">
    <property type="entry name" value="PTrfase/Anion_transptr"/>
</dbReference>
<dbReference type="InterPro" id="IPR002178">
    <property type="entry name" value="PTS_EIIA_type-2_dom"/>
</dbReference>
<dbReference type="InterPro" id="IPR051541">
    <property type="entry name" value="PTS_SugarTrans_NitroReg"/>
</dbReference>
<dbReference type="NCBIfam" id="NF007236">
    <property type="entry name" value="PRK09665.1"/>
    <property type="match status" value="1"/>
</dbReference>
<dbReference type="PANTHER" id="PTHR47738">
    <property type="entry name" value="PTS SYSTEM FRUCTOSE-LIKE EIIA COMPONENT-RELATED"/>
    <property type="match status" value="1"/>
</dbReference>
<dbReference type="PANTHER" id="PTHR47738:SF4">
    <property type="entry name" value="PTS SYSTEM GALACTITOL-SPECIFIC EIIA COMPONENT"/>
    <property type="match status" value="1"/>
</dbReference>
<dbReference type="Pfam" id="PF00359">
    <property type="entry name" value="PTS_EIIA_2"/>
    <property type="match status" value="1"/>
</dbReference>
<dbReference type="SUPFAM" id="SSF55804">
    <property type="entry name" value="Phoshotransferase/anion transport protein"/>
    <property type="match status" value="1"/>
</dbReference>
<dbReference type="PROSITE" id="PS51094">
    <property type="entry name" value="PTS_EIIA_TYPE_2"/>
    <property type="match status" value="1"/>
</dbReference>
<protein>
    <recommendedName>
        <fullName evidence="1">PTS system galactitol-specific EIIA component</fullName>
    </recommendedName>
    <alternativeName>
        <fullName evidence="1">EIIB-Gat</fullName>
    </alternativeName>
    <alternativeName>
        <fullName evidence="1">Galactitol-specific phosphotransferase enzyme IIA component</fullName>
    </alternativeName>
</protein>
<name>PTKA_ECOL6</name>
<reference key="1">
    <citation type="journal article" date="2002" name="Proc. Natl. Acad. Sci. U.S.A.">
        <title>Extensive mosaic structure revealed by the complete genome sequence of uropathogenic Escherichia coli.</title>
        <authorList>
            <person name="Welch R.A."/>
            <person name="Burland V."/>
            <person name="Plunkett G. III"/>
            <person name="Redford P."/>
            <person name="Roesch P."/>
            <person name="Rasko D."/>
            <person name="Buckles E.L."/>
            <person name="Liou S.-R."/>
            <person name="Boutin A."/>
            <person name="Hackett J."/>
            <person name="Stroud D."/>
            <person name="Mayhew G.F."/>
            <person name="Rose D.J."/>
            <person name="Zhou S."/>
            <person name="Schwartz D.C."/>
            <person name="Perna N.T."/>
            <person name="Mobley H.L.T."/>
            <person name="Donnenberg M.S."/>
            <person name="Blattner F.R."/>
        </authorList>
    </citation>
    <scope>NUCLEOTIDE SEQUENCE [LARGE SCALE GENOMIC DNA]</scope>
    <source>
        <strain>CFT073 / ATCC 700928 / UPEC</strain>
    </source>
</reference>
<evidence type="ECO:0000250" key="1">
    <source>
        <dbReference type="UniProtKB" id="P69828"/>
    </source>
</evidence>
<evidence type="ECO:0000255" key="2">
    <source>
        <dbReference type="PROSITE-ProRule" id="PRU00417"/>
    </source>
</evidence>
<evidence type="ECO:0000305" key="3"/>
<feature type="chain" id="PRO_0000186577" description="PTS system galactitol-specific EIIA component">
    <location>
        <begin position="1"/>
        <end position="150"/>
    </location>
</feature>
<feature type="domain" description="PTS EIIA type-2" evidence="2">
    <location>
        <begin position="1"/>
        <end position="144"/>
    </location>
</feature>
<feature type="active site" description="Tele-phosphohistidine intermediate" evidence="2">
    <location>
        <position position="62"/>
    </location>
</feature>
<feature type="modified residue" description="Phosphohistidine; by HPr" evidence="3">
    <location>
        <position position="62"/>
    </location>
</feature>
<accession>P69813</accession>
<accession>P37187</accession>
<accession>P76413</accession>
<proteinExistence type="inferred from homology"/>
<comment type="function">
    <text evidence="1">The phosphoenolpyruvate-dependent sugar phosphotransferase system (sugar PTS), a major carbohydrate active transport system, catalyzes the phosphorylation of incoming sugar substrates concomitantly with their translocation across the cell membrane. The enzyme II complex composed of GatA, GatB and GatC is involved in galactitol transport.</text>
</comment>
<comment type="subunit">
    <text evidence="1">Forms a complex with one each of subunit of GatA, GatB and 2 subunits of GatC.</text>
</comment>
<comment type="subcellular location">
    <subcellularLocation>
        <location evidence="3">Cytoplasm</location>
    </subcellularLocation>
</comment>
<comment type="induction">
    <text evidence="1">Constitutively expressed.</text>
</comment>
<comment type="domain">
    <text evidence="2">The EIIA domain is phosphorylated by phospho-HPr on a histidyl residue. Then, it transfers the phosphoryl group to the EIIB domain.</text>
</comment>
<organism>
    <name type="scientific">Escherichia coli O6:H1 (strain CFT073 / ATCC 700928 / UPEC)</name>
    <dbReference type="NCBI Taxonomy" id="199310"/>
    <lineage>
        <taxon>Bacteria</taxon>
        <taxon>Pseudomonadati</taxon>
        <taxon>Pseudomonadota</taxon>
        <taxon>Gammaproteobacteria</taxon>
        <taxon>Enterobacterales</taxon>
        <taxon>Enterobacteriaceae</taxon>
        <taxon>Escherichia</taxon>
    </lineage>
</organism>